<keyword id="KW-0963">Cytoplasm</keyword>
<keyword id="KW-0539">Nucleus</keyword>
<keyword id="KW-1185">Reference proteome</keyword>
<comment type="function">
    <text>Is associated with a DNA binding complex that binds to the G box, a well-characterized cis-acting DNA regulatory element found in plant genes.</text>
</comment>
<comment type="subunit">
    <text evidence="3">May form a complex with the transcriptional activator VP1 and the bZIP transcription factor EMBP1.</text>
</comment>
<comment type="subcellular location">
    <subcellularLocation>
        <location>Cytoplasm</location>
    </subcellularLocation>
    <subcellularLocation>
        <location>Nucleus</location>
    </subcellularLocation>
</comment>
<comment type="tissue specificity">
    <text evidence="2">Expressed in seedlings, roots and panicles and at lower levels in flag leaves and internodes.</text>
</comment>
<comment type="induction">
    <text evidence="2">By wounding, drought and salt stresses, benzothiadiazole (BTH), ethephon, methyl jasmonate (MeJa), hydrogen peroxide, abscisic acid (ABA) and incompatible and compatible races of rice blast fungus (M.grisea).</text>
</comment>
<comment type="similarity">
    <text evidence="4">Belongs to the 14-3-3 family.</text>
</comment>
<proteinExistence type="evidence at protein level"/>
<feature type="chain" id="PRO_0000058696" description="14-3-3-like protein GF14-F">
    <location>
        <begin position="1"/>
        <end position="260"/>
    </location>
</feature>
<feature type="region of interest" description="Disordered" evidence="1">
    <location>
        <begin position="241"/>
        <end position="260"/>
    </location>
</feature>
<feature type="compositionally biased region" description="Basic and acidic residues" evidence="1">
    <location>
        <begin position="247"/>
        <end position="260"/>
    </location>
</feature>
<feature type="sequence conflict" description="In Ref. 1; BAA03711." evidence="4" ref="1">
    <original>K</original>
    <variation>N</variation>
    <location>
        <position position="124"/>
    </location>
</feature>
<feature type="sequence conflict" description="In Ref. 1; BAA03711." evidence="4" ref="1">
    <original>F</original>
    <variation>L</variation>
    <location>
        <position position="183"/>
    </location>
</feature>
<sequence length="260" mass="29178">MSPAEASREENVYMAKLAEQAERYEEMVEFMEKVAKTTDVGELTVEERNLLSVAYKNVIGARRASWRIISSIEQKEESRGNEAYVASIKEYRSRIETELSKICDGILKLLDSHLVPSATAAESKVFYLKMKGDYHRYLAEFKSGAERKEAAENTLVAYKSAQDIALADLPTTHPIRLGLALNFSVFYYEILNSPDRACNLAKQAFDDAIAELDTLGEESYKDSTLIMQLLRDNLTLWTSDNAEDGGDEIKEAAKPEGEGH</sequence>
<protein>
    <recommendedName>
        <fullName>14-3-3-like protein GF14-F</fullName>
    </recommendedName>
    <alternativeName>
        <fullName>14-3-3-like protein S94</fullName>
    </alternativeName>
    <alternativeName>
        <fullName>G-box factor 14-3-3 homolog F</fullName>
    </alternativeName>
    <alternativeName>
        <fullName>OsGF14a</fullName>
    </alternativeName>
    <alternativeName>
        <fullName>Stress-regulated 14-3-3 protein</fullName>
        <shortName>SR14-3-3</shortName>
    </alternativeName>
</protein>
<name>14336_ORYSJ</name>
<accession>Q06967</accession>
<accession>A0A0P0W2E6</accession>
<accession>Q10E23</accession>
<accession>Q53RI8</accession>
<evidence type="ECO:0000256" key="1">
    <source>
        <dbReference type="SAM" id="MobiDB-lite"/>
    </source>
</evidence>
<evidence type="ECO:0000269" key="2">
    <source>
    </source>
</evidence>
<evidence type="ECO:0000269" key="3">
    <source>
    </source>
</evidence>
<evidence type="ECO:0000305" key="4"/>
<evidence type="ECO:0000312" key="5">
    <source>
        <dbReference type="EMBL" id="EAZ28334.1"/>
    </source>
</evidence>
<dbReference type="EMBL" id="D16140">
    <property type="protein sequence ID" value="BAA03711.1"/>
    <property type="molecule type" value="mRNA"/>
</dbReference>
<dbReference type="EMBL" id="EU268000">
    <property type="protein sequence ID" value="ACA50522.1"/>
    <property type="molecule type" value="mRNA"/>
</dbReference>
<dbReference type="EMBL" id="KC140113">
    <property type="protein sequence ID" value="AGT42305.1"/>
    <property type="molecule type" value="mRNA"/>
</dbReference>
<dbReference type="EMBL" id="AC087181">
    <property type="protein sequence ID" value="AAX95656.1"/>
    <property type="molecule type" value="Genomic_DNA"/>
</dbReference>
<dbReference type="EMBL" id="DP000009">
    <property type="protein sequence ID" value="ABF98505.1"/>
    <property type="molecule type" value="Genomic_DNA"/>
</dbReference>
<dbReference type="EMBL" id="DP000009">
    <property type="protein sequence ID" value="ABF98506.1"/>
    <property type="molecule type" value="Genomic_DNA"/>
</dbReference>
<dbReference type="EMBL" id="DP000009">
    <property type="protein sequence ID" value="ABF98507.1"/>
    <property type="molecule type" value="Genomic_DNA"/>
</dbReference>
<dbReference type="EMBL" id="AP008209">
    <property type="protein sequence ID" value="BAF12965.1"/>
    <property type="molecule type" value="Genomic_DNA"/>
</dbReference>
<dbReference type="EMBL" id="AP014959">
    <property type="protein sequence ID" value="BAS86016.1"/>
    <property type="molecule type" value="Genomic_DNA"/>
</dbReference>
<dbReference type="EMBL" id="CM000140">
    <property type="protein sequence ID" value="EAZ28334.1"/>
    <property type="molecule type" value="Genomic_DNA"/>
</dbReference>
<dbReference type="EMBL" id="AK062077">
    <property type="protein sequence ID" value="BAG88210.1"/>
    <property type="molecule type" value="mRNA"/>
</dbReference>
<dbReference type="EMBL" id="AK103065">
    <property type="protein sequence ID" value="BAG95867.1"/>
    <property type="molecule type" value="mRNA"/>
</dbReference>
<dbReference type="PIR" id="S30927">
    <property type="entry name" value="S30927"/>
</dbReference>
<dbReference type="RefSeq" id="XP_015631133.1">
    <property type="nucleotide sequence ID" value="XM_015775647.1"/>
</dbReference>
<dbReference type="RefSeq" id="XP_015631134.1">
    <property type="nucleotide sequence ID" value="XM_015775648.1"/>
</dbReference>
<dbReference type="SMR" id="Q06967"/>
<dbReference type="DIP" id="DIP-46490N"/>
<dbReference type="FunCoup" id="Q06967">
    <property type="interactions" value="2138"/>
</dbReference>
<dbReference type="IntAct" id="Q06967">
    <property type="interactions" value="12"/>
</dbReference>
<dbReference type="STRING" id="39947.Q06967"/>
<dbReference type="PaxDb" id="39947-Q06967"/>
<dbReference type="EnsemblPlants" id="Os03t0710800-01">
    <property type="protein sequence ID" value="Os03t0710800-01"/>
    <property type="gene ID" value="Os03g0710800"/>
</dbReference>
<dbReference type="Gramene" id="Os03t0710800-01">
    <property type="protein sequence ID" value="Os03t0710800-01"/>
    <property type="gene ID" value="Os03g0710800"/>
</dbReference>
<dbReference type="KEGG" id="dosa:Os03g0710800"/>
<dbReference type="eggNOG" id="KOG0841">
    <property type="taxonomic scope" value="Eukaryota"/>
</dbReference>
<dbReference type="HOGENOM" id="CLU_058290_0_0_1"/>
<dbReference type="InParanoid" id="Q06967"/>
<dbReference type="OMA" id="SKGTDKH"/>
<dbReference type="OrthoDB" id="10260625at2759"/>
<dbReference type="PlantReactome" id="R-OSA-5632095">
    <property type="pathway name" value="Brassinosteroid signaling"/>
</dbReference>
<dbReference type="Proteomes" id="UP000000763">
    <property type="component" value="Chromosome 3"/>
</dbReference>
<dbReference type="Proteomes" id="UP000007752">
    <property type="component" value="Chromosome 3"/>
</dbReference>
<dbReference type="Proteomes" id="UP000059680">
    <property type="component" value="Chromosome 3"/>
</dbReference>
<dbReference type="GO" id="GO:0005737">
    <property type="term" value="C:cytoplasm"/>
    <property type="evidence" value="ECO:0000250"/>
    <property type="project" value="Gramene"/>
</dbReference>
<dbReference type="GO" id="GO:0005634">
    <property type="term" value="C:nucleus"/>
    <property type="evidence" value="ECO:0000250"/>
    <property type="project" value="Gramene"/>
</dbReference>
<dbReference type="GO" id="GO:0008104">
    <property type="term" value="P:protein localization"/>
    <property type="evidence" value="ECO:0000318"/>
    <property type="project" value="GO_Central"/>
</dbReference>
<dbReference type="GO" id="GO:0007165">
    <property type="term" value="P:signal transduction"/>
    <property type="evidence" value="ECO:0000318"/>
    <property type="project" value="GO_Central"/>
</dbReference>
<dbReference type="FunFam" id="1.20.190.20:FF:000002">
    <property type="entry name" value="14-3-3 protein epsilon"/>
    <property type="match status" value="1"/>
</dbReference>
<dbReference type="Gene3D" id="1.20.190.20">
    <property type="entry name" value="14-3-3 domain"/>
    <property type="match status" value="1"/>
</dbReference>
<dbReference type="InterPro" id="IPR000308">
    <property type="entry name" value="14-3-3"/>
</dbReference>
<dbReference type="InterPro" id="IPR023409">
    <property type="entry name" value="14-3-3_CS"/>
</dbReference>
<dbReference type="InterPro" id="IPR036815">
    <property type="entry name" value="14-3-3_dom_sf"/>
</dbReference>
<dbReference type="InterPro" id="IPR023410">
    <property type="entry name" value="14-3-3_domain"/>
</dbReference>
<dbReference type="PANTHER" id="PTHR18860">
    <property type="entry name" value="14-3-3 PROTEIN"/>
    <property type="match status" value="1"/>
</dbReference>
<dbReference type="Pfam" id="PF00244">
    <property type="entry name" value="14-3-3"/>
    <property type="match status" value="1"/>
</dbReference>
<dbReference type="PIRSF" id="PIRSF000868">
    <property type="entry name" value="14-3-3"/>
    <property type="match status" value="1"/>
</dbReference>
<dbReference type="PRINTS" id="PR00305">
    <property type="entry name" value="1433ZETA"/>
</dbReference>
<dbReference type="SMART" id="SM00101">
    <property type="entry name" value="14_3_3"/>
    <property type="match status" value="1"/>
</dbReference>
<dbReference type="SUPFAM" id="SSF48445">
    <property type="entry name" value="14-3-3 protein"/>
    <property type="match status" value="1"/>
</dbReference>
<dbReference type="PROSITE" id="PS00796">
    <property type="entry name" value="1433_1"/>
    <property type="match status" value="1"/>
</dbReference>
<dbReference type="PROSITE" id="PS00797">
    <property type="entry name" value="1433_2"/>
    <property type="match status" value="1"/>
</dbReference>
<organism>
    <name type="scientific">Oryza sativa subsp. japonica</name>
    <name type="common">Rice</name>
    <dbReference type="NCBI Taxonomy" id="39947"/>
    <lineage>
        <taxon>Eukaryota</taxon>
        <taxon>Viridiplantae</taxon>
        <taxon>Streptophyta</taxon>
        <taxon>Embryophyta</taxon>
        <taxon>Tracheophyta</taxon>
        <taxon>Spermatophyta</taxon>
        <taxon>Magnoliopsida</taxon>
        <taxon>Liliopsida</taxon>
        <taxon>Poales</taxon>
        <taxon>Poaceae</taxon>
        <taxon>BOP clade</taxon>
        <taxon>Oryzoideae</taxon>
        <taxon>Oryzeae</taxon>
        <taxon>Oryzinae</taxon>
        <taxon>Oryza</taxon>
        <taxon>Oryza sativa</taxon>
    </lineage>
</organism>
<reference key="1">
    <citation type="journal article" date="1993" name="FEBS Lett.">
        <title>Molecular structure of ras-related small GTP-binding protein genes of rice plants and GTPase activities of gene products in Escherichia coli.</title>
        <authorList>
            <person name="Uchimiya H."/>
            <person name="Kidou S."/>
            <person name="Anai T."/>
            <person name="Umeda M."/>
            <person name="Aotsuka S."/>
            <person name="Tsuge T."/>
            <person name="Kato A."/>
        </authorList>
    </citation>
    <scope>NUCLEOTIDE SEQUENCE [MRNA]</scope>
</reference>
<reference key="2">
    <citation type="journal article" date="1993" name="Plant Mol. Biol.">
        <title>Isolation and characterization of a rice cDNA similar to the bovine brain-specific 14-3-3 protein gene.</title>
        <authorList>
            <person name="Kidou S."/>
            <person name="Umeda M."/>
            <person name="Kato A."/>
            <person name="Uchimiya H."/>
        </authorList>
    </citation>
    <scope>NUCLEOTIDE SEQUENCE [MRNA]</scope>
</reference>
<reference key="3">
    <citation type="submission" date="2007-11" db="EMBL/GenBank/DDBJ databases">
        <title>Molecular cloning of the 14-3-3 protein gene in rice.</title>
        <authorList>
            <person name="Yoon U.H."/>
            <person name="Kim Y.H."/>
        </authorList>
    </citation>
    <scope>NUCLEOTIDE SEQUENCE [MRNA]</scope>
    <source>
        <strain>cv. Ilpoombyeo</strain>
        <tissue>Seed</tissue>
    </source>
</reference>
<reference key="4">
    <citation type="submission" date="2012-11" db="EMBL/GenBank/DDBJ databases">
        <title>Structural and expression analysis of immature seed genes in Oryza sativa L.</title>
        <authorList>
            <person name="Yoon U.H."/>
        </authorList>
    </citation>
    <scope>NUCLEOTIDE SEQUENCE [MRNA]</scope>
    <source>
        <strain>cv. Ilpoombyeo</strain>
        <tissue>Immature seed</tissue>
    </source>
</reference>
<reference key="5">
    <citation type="journal article" date="2005" name="Genome Res.">
        <title>Sequence, annotation, and analysis of synteny between rice chromosome 3 and diverged grass species.</title>
        <authorList>
            <consortium name="The rice chromosome 3 sequencing consortium"/>
            <person name="Buell C.R."/>
            <person name="Yuan Q."/>
            <person name="Ouyang S."/>
            <person name="Liu J."/>
            <person name="Zhu W."/>
            <person name="Wang A."/>
            <person name="Maiti R."/>
            <person name="Haas B."/>
            <person name="Wortman J."/>
            <person name="Pertea M."/>
            <person name="Jones K.M."/>
            <person name="Kim M."/>
            <person name="Overton L."/>
            <person name="Tsitrin T."/>
            <person name="Fadrosh D."/>
            <person name="Bera J."/>
            <person name="Weaver B."/>
            <person name="Jin S."/>
            <person name="Johri S."/>
            <person name="Reardon M."/>
            <person name="Webb K."/>
            <person name="Hill J."/>
            <person name="Moffat K."/>
            <person name="Tallon L."/>
            <person name="Van Aken S."/>
            <person name="Lewis M."/>
            <person name="Utterback T."/>
            <person name="Feldblyum T."/>
            <person name="Zismann V."/>
            <person name="Iobst S."/>
            <person name="Hsiao J."/>
            <person name="de Vazeille A.R."/>
            <person name="Salzberg S.L."/>
            <person name="White O."/>
            <person name="Fraser C.M."/>
            <person name="Yu Y."/>
            <person name="Kim H."/>
            <person name="Rambo T."/>
            <person name="Currie J."/>
            <person name="Collura K."/>
            <person name="Kernodle-Thompson S."/>
            <person name="Wei F."/>
            <person name="Kudrna K."/>
            <person name="Ammiraju J.S.S."/>
            <person name="Luo M."/>
            <person name="Goicoechea J.L."/>
            <person name="Wing R.A."/>
            <person name="Henry D."/>
            <person name="Oates R."/>
            <person name="Palmer M."/>
            <person name="Pries G."/>
            <person name="Saski C."/>
            <person name="Simmons J."/>
            <person name="Soderlund C."/>
            <person name="Nelson W."/>
            <person name="de la Bastide M."/>
            <person name="Spiegel L."/>
            <person name="Nascimento L."/>
            <person name="Huang E."/>
            <person name="Preston R."/>
            <person name="Zutavern T."/>
            <person name="Palmer L."/>
            <person name="O'Shaughnessy A."/>
            <person name="Dike S."/>
            <person name="McCombie W.R."/>
            <person name="Minx P."/>
            <person name="Cordum H."/>
            <person name="Wilson R."/>
            <person name="Jin W."/>
            <person name="Lee H.R."/>
            <person name="Jiang J."/>
            <person name="Jackson S."/>
        </authorList>
    </citation>
    <scope>NUCLEOTIDE SEQUENCE [LARGE SCALE GENOMIC DNA]</scope>
    <source>
        <strain>cv. Nipponbare</strain>
    </source>
</reference>
<reference key="6">
    <citation type="journal article" date="2005" name="Nature">
        <title>The map-based sequence of the rice genome.</title>
        <authorList>
            <consortium name="International rice genome sequencing project (IRGSP)"/>
        </authorList>
    </citation>
    <scope>NUCLEOTIDE SEQUENCE [LARGE SCALE GENOMIC DNA]</scope>
    <source>
        <strain>cv. Nipponbare</strain>
    </source>
</reference>
<reference key="7">
    <citation type="journal article" date="2008" name="Nucleic Acids Res.">
        <title>The rice annotation project database (RAP-DB): 2008 update.</title>
        <authorList>
            <consortium name="The rice annotation project (RAP)"/>
        </authorList>
    </citation>
    <scope>GENOME REANNOTATION</scope>
    <source>
        <strain>cv. Nipponbare</strain>
    </source>
</reference>
<reference key="8">
    <citation type="journal article" date="2013" name="Rice">
        <title>Improvement of the Oryza sativa Nipponbare reference genome using next generation sequence and optical map data.</title>
        <authorList>
            <person name="Kawahara Y."/>
            <person name="de la Bastide M."/>
            <person name="Hamilton J.P."/>
            <person name="Kanamori H."/>
            <person name="McCombie W.R."/>
            <person name="Ouyang S."/>
            <person name="Schwartz D.C."/>
            <person name="Tanaka T."/>
            <person name="Wu J."/>
            <person name="Zhou S."/>
            <person name="Childs K.L."/>
            <person name="Davidson R.M."/>
            <person name="Lin H."/>
            <person name="Quesada-Ocampo L."/>
            <person name="Vaillancourt B."/>
            <person name="Sakai H."/>
            <person name="Lee S.S."/>
            <person name="Kim J."/>
            <person name="Numa H."/>
            <person name="Itoh T."/>
            <person name="Buell C.R."/>
            <person name="Matsumoto T."/>
        </authorList>
    </citation>
    <scope>GENOME REANNOTATION</scope>
    <source>
        <strain>cv. Nipponbare</strain>
    </source>
</reference>
<reference key="9">
    <citation type="journal article" date="2005" name="PLoS Biol.">
        <title>The genomes of Oryza sativa: a history of duplications.</title>
        <authorList>
            <person name="Yu J."/>
            <person name="Wang J."/>
            <person name="Lin W."/>
            <person name="Li S."/>
            <person name="Li H."/>
            <person name="Zhou J."/>
            <person name="Ni P."/>
            <person name="Dong W."/>
            <person name="Hu S."/>
            <person name="Zeng C."/>
            <person name="Zhang J."/>
            <person name="Zhang Y."/>
            <person name="Li R."/>
            <person name="Xu Z."/>
            <person name="Li S."/>
            <person name="Li X."/>
            <person name="Zheng H."/>
            <person name="Cong L."/>
            <person name="Lin L."/>
            <person name="Yin J."/>
            <person name="Geng J."/>
            <person name="Li G."/>
            <person name="Shi J."/>
            <person name="Liu J."/>
            <person name="Lv H."/>
            <person name="Li J."/>
            <person name="Wang J."/>
            <person name="Deng Y."/>
            <person name="Ran L."/>
            <person name="Shi X."/>
            <person name="Wang X."/>
            <person name="Wu Q."/>
            <person name="Li C."/>
            <person name="Ren X."/>
            <person name="Wang J."/>
            <person name="Wang X."/>
            <person name="Li D."/>
            <person name="Liu D."/>
            <person name="Zhang X."/>
            <person name="Ji Z."/>
            <person name="Zhao W."/>
            <person name="Sun Y."/>
            <person name="Zhang Z."/>
            <person name="Bao J."/>
            <person name="Han Y."/>
            <person name="Dong L."/>
            <person name="Ji J."/>
            <person name="Chen P."/>
            <person name="Wu S."/>
            <person name="Liu J."/>
            <person name="Xiao Y."/>
            <person name="Bu D."/>
            <person name="Tan J."/>
            <person name="Yang L."/>
            <person name="Ye C."/>
            <person name="Zhang J."/>
            <person name="Xu J."/>
            <person name="Zhou Y."/>
            <person name="Yu Y."/>
            <person name="Zhang B."/>
            <person name="Zhuang S."/>
            <person name="Wei H."/>
            <person name="Liu B."/>
            <person name="Lei M."/>
            <person name="Yu H."/>
            <person name="Li Y."/>
            <person name="Xu H."/>
            <person name="Wei S."/>
            <person name="He X."/>
            <person name="Fang L."/>
            <person name="Zhang Z."/>
            <person name="Zhang Y."/>
            <person name="Huang X."/>
            <person name="Su Z."/>
            <person name="Tong W."/>
            <person name="Li J."/>
            <person name="Tong Z."/>
            <person name="Li S."/>
            <person name="Ye J."/>
            <person name="Wang L."/>
            <person name="Fang L."/>
            <person name="Lei T."/>
            <person name="Chen C.-S."/>
            <person name="Chen H.-C."/>
            <person name="Xu Z."/>
            <person name="Li H."/>
            <person name="Huang H."/>
            <person name="Zhang F."/>
            <person name="Xu H."/>
            <person name="Li N."/>
            <person name="Zhao C."/>
            <person name="Li S."/>
            <person name="Dong L."/>
            <person name="Huang Y."/>
            <person name="Li L."/>
            <person name="Xi Y."/>
            <person name="Qi Q."/>
            <person name="Li W."/>
            <person name="Zhang B."/>
            <person name="Hu W."/>
            <person name="Zhang Y."/>
            <person name="Tian X."/>
            <person name="Jiao Y."/>
            <person name="Liang X."/>
            <person name="Jin J."/>
            <person name="Gao L."/>
            <person name="Zheng W."/>
            <person name="Hao B."/>
            <person name="Liu S.-M."/>
            <person name="Wang W."/>
            <person name="Yuan L."/>
            <person name="Cao M."/>
            <person name="McDermott J."/>
            <person name="Samudrala R."/>
            <person name="Wang J."/>
            <person name="Wong G.K.-S."/>
            <person name="Yang H."/>
        </authorList>
    </citation>
    <scope>NUCLEOTIDE SEQUENCE [LARGE SCALE GENOMIC DNA]</scope>
    <source>
        <strain>cv. Nipponbare</strain>
    </source>
</reference>
<reference key="10">
    <citation type="journal article" date="2003" name="Science">
        <title>Collection, mapping, and annotation of over 28,000 cDNA clones from japonica rice.</title>
        <authorList>
            <consortium name="The rice full-length cDNA consortium"/>
        </authorList>
    </citation>
    <scope>NUCLEOTIDE SEQUENCE [LARGE SCALE MRNA]</scope>
    <source>
        <strain>cv. Nipponbare</strain>
    </source>
</reference>
<reference key="11">
    <citation type="journal article" date="1998" name="Plant Cell">
        <title>14-3-3 proteins are part of an abscisic acid-VIVIPAROUS1 (VP1) response complex in the Em promoter and interact with VP1 and EmBP1.</title>
        <authorList>
            <person name="Schultz T.F."/>
            <person name="Medina J."/>
            <person name="Hill A."/>
            <person name="Quatrano R.S."/>
        </authorList>
    </citation>
    <scope>SUBUNIT</scope>
    <scope>SUBCELLULAR LOCATION</scope>
</reference>
<reference key="12">
    <citation type="journal article" date="2006" name="DNA Res.">
        <title>The rice 14-3-3 gene family and its involvement in responses to biotic and abiotic stress.</title>
        <authorList>
            <person name="Chen F."/>
            <person name="Li Q."/>
            <person name="Sun L."/>
            <person name="He Z."/>
        </authorList>
    </citation>
    <scope>SUBCELLULAR LOCATION</scope>
    <scope>TISSUE SPECIFICITY</scope>
    <scope>INDUCTION</scope>
    <scope>NOMENCLATURE</scope>
</reference>
<gene>
    <name type="primary">GF14F</name>
    <name type="ordered locus">Os03g0710800</name>
    <name type="ordered locus">LOC_Os03g50290</name>
    <name evidence="5" type="ORF">OsJ_12311</name>
</gene>